<gene>
    <name type="primary">TBC1D22A</name>
    <name type="synonym">C22orf4</name>
</gene>
<keyword id="KW-0002">3D-structure</keyword>
<keyword id="KW-0007">Acetylation</keyword>
<keyword id="KW-0025">Alternative splicing</keyword>
<keyword id="KW-0903">Direct protein sequencing</keyword>
<keyword id="KW-0343">GTPase activation</keyword>
<keyword id="KW-0597">Phosphoprotein</keyword>
<keyword id="KW-1267">Proteomics identification</keyword>
<keyword id="KW-1185">Reference proteome</keyword>
<sequence>MASDGARKQFWKRSNSKLPGSIQHVYGAQHPPFDPLLHGTLLRSTAKMPTTPVKAKRVSTFQEFESNTSDAWDAGEDDDELLAMAAESLNSEVVMETANRVLRNHSQRQGRPTLQEGPGLQQKPRPEAEPPSPPSGDLRLVKSVSESHTSCPAESASDAAPLQRSQSLPHSATVTLGGTSDPSTLSSSALSEREASRLDKFKQLLAGPNTDLEELRRLSWSGIPKPVRPMTWKLLSGYLPANVDRRPATLQRKQKEYFAFIEHYYDSRNDEVHQDTYRQIHIDIPRMSPEALILQPKVTEIFERILFIWAIRHPASGYVQGINDLVTPFFVVFICEYIEAEEVDTVDVSGVPAEVLCNIEADTYWCMSKLLDGIQDNYTFAQPGIQMKVKMLEELVSRIDEQVHRHLDQHEVRYLQFAFRWMNNLLMREVPLRCTIRLWDTYQSEPDGFSHFHLYVCAAFLVRWRKEILEEKDFQELLLFLQNLPTAHWDDEDISLLLAEAYRLKFAFADAPNHYKK</sequence>
<name>TB22A_HUMAN</name>
<comment type="function">
    <text evidence="1">May act as a GTPase-activating protein for Rab family protein(s).</text>
</comment>
<comment type="subunit">
    <text evidence="5 6">Homodimer (PubMed:18186464). Interacts with ACBD3 and ARFGEF1. Interacts with YWHAB, YWHAE, YWHAG, YWHAH, YWHAQ and YWHAZ (PubMed:23572552).</text>
</comment>
<comment type="interaction">
    <interactant intactId="EBI-2821276">
        <id>Q8WUA7</id>
    </interactant>
    <interactant intactId="EBI-1791792">
        <id>Q9H3P7</id>
        <label>ACBD3</label>
    </interactant>
    <organismsDiffer>false</organismsDiffer>
    <experiments>15</experiments>
</comment>
<comment type="interaction">
    <interactant intactId="EBI-21575846">
        <id>Q8WUA7-2</id>
    </interactant>
    <interactant intactId="EBI-748312">
        <id>P49821</id>
        <label>NDUFV1</label>
    </interactant>
    <organismsDiffer>false</organismsDiffer>
    <experiments>3</experiments>
</comment>
<comment type="interaction">
    <interactant intactId="EBI-21575846">
        <id>Q8WUA7-2</id>
    </interactant>
    <interactant intactId="EBI-988601">
        <id>O43933</id>
        <label>PEX1</label>
    </interactant>
    <organismsDiffer>false</organismsDiffer>
    <experiments>3</experiments>
</comment>
<comment type="interaction">
    <interactant intactId="EBI-21575846">
        <id>Q8WUA7-2</id>
    </interactant>
    <interactant intactId="EBI-711909">
        <id>P02766</id>
        <label>TTR</label>
    </interactant>
    <organismsDiffer>false</organismsDiffer>
    <experiments>3</experiments>
</comment>
<comment type="interaction">
    <interactant intactId="EBI-21575846">
        <id>Q8WUA7-2</id>
    </interactant>
    <interactant intactId="EBI-720609">
        <id>O76024</id>
        <label>WFS1</label>
    </interactant>
    <organismsDiffer>false</organismsDiffer>
    <experiments>3</experiments>
</comment>
<comment type="alternative products">
    <event type="alternative splicing"/>
    <isoform>
        <id>Q8WUA7-1</id>
        <name>1</name>
        <sequence type="displayed"/>
    </isoform>
    <isoform>
        <id>Q8WUA7-2</id>
        <name>2</name>
        <sequence type="described" ref="VSP_010382 VSP_010383"/>
    </isoform>
    <isoform>
        <id>Q8WUA7-3</id>
        <name>3</name>
        <sequence type="described" ref="VSP_015142 VSP_015143 VSP_015144"/>
    </isoform>
    <isoform>
        <id>Q8WUA7-4</id>
        <name>4</name>
        <sequence type="described" ref="VSP_015142"/>
    </isoform>
</comment>
<comment type="sequence caution" evidence="9">
    <conflict type="erroneous initiation">
        <sequence resource="EMBL-CDS" id="CAB46628"/>
    </conflict>
</comment>
<accession>Q8WUA7</accession>
<accession>B0QYI2</accession>
<accession>B0QYI3</accession>
<accession>B9A6M3</accession>
<accession>Q5TE47</accession>
<accession>Q6ZUH2</accession>
<accession>Q92680</accession>
<accession>Q9BVD6</accession>
<accession>Q9UGG0</accession>
<accession>Q9UGT2</accession>
<accession>Q9UGU6</accession>
<accession>Q9UH25</accession>
<accession>Q9Y4W5</accession>
<proteinExistence type="evidence at protein level"/>
<organism>
    <name type="scientific">Homo sapiens</name>
    <name type="common">Human</name>
    <dbReference type="NCBI Taxonomy" id="9606"/>
    <lineage>
        <taxon>Eukaryota</taxon>
        <taxon>Metazoa</taxon>
        <taxon>Chordata</taxon>
        <taxon>Craniata</taxon>
        <taxon>Vertebrata</taxon>
        <taxon>Euteleostomi</taxon>
        <taxon>Mammalia</taxon>
        <taxon>Eutheria</taxon>
        <taxon>Euarchontoglires</taxon>
        <taxon>Primates</taxon>
        <taxon>Haplorrhini</taxon>
        <taxon>Catarrhini</taxon>
        <taxon>Hominidae</taxon>
        <taxon>Homo</taxon>
    </lineage>
</organism>
<dbReference type="EMBL" id="AB449908">
    <property type="protein sequence ID" value="BAH16651.1"/>
    <property type="molecule type" value="mRNA"/>
</dbReference>
<dbReference type="EMBL" id="CR456412">
    <property type="protein sequence ID" value="CAG30298.1"/>
    <property type="molecule type" value="mRNA"/>
</dbReference>
<dbReference type="EMBL" id="AK125705">
    <property type="protein sequence ID" value="BAC86253.1"/>
    <property type="molecule type" value="mRNA"/>
</dbReference>
<dbReference type="EMBL" id="AK127653">
    <property type="protein sequence ID" value="BAG54543.1"/>
    <property type="molecule type" value="mRNA"/>
</dbReference>
<dbReference type="EMBL" id="U51561">
    <property type="protein sequence ID" value="AAD12228.1"/>
    <property type="molecule type" value="Genomic_DNA"/>
</dbReference>
<dbReference type="EMBL" id="AL023733">
    <property type="status" value="NOT_ANNOTATED_CDS"/>
    <property type="molecule type" value="Genomic_DNA"/>
</dbReference>
<dbReference type="EMBL" id="AL118516">
    <property type="status" value="NOT_ANNOTATED_CDS"/>
    <property type="molecule type" value="Genomic_DNA"/>
</dbReference>
<dbReference type="EMBL" id="FP325331">
    <property type="status" value="NOT_ANNOTATED_CDS"/>
    <property type="molecule type" value="Genomic_DNA"/>
</dbReference>
<dbReference type="EMBL" id="Z79999">
    <property type="status" value="NOT_ANNOTATED_CDS"/>
    <property type="molecule type" value="Genomic_DNA"/>
</dbReference>
<dbReference type="EMBL" id="Z80896">
    <property type="status" value="NOT_ANNOTATED_CDS"/>
    <property type="molecule type" value="Genomic_DNA"/>
</dbReference>
<dbReference type="EMBL" id="Z82187">
    <property type="status" value="NOT_ANNOTATED_CDS"/>
    <property type="molecule type" value="Genomic_DNA"/>
</dbReference>
<dbReference type="EMBL" id="CH471138">
    <property type="protein sequence ID" value="EAW73443.1"/>
    <property type="molecule type" value="Genomic_DNA"/>
</dbReference>
<dbReference type="EMBL" id="CH471138">
    <property type="protein sequence ID" value="EAW73445.1"/>
    <property type="molecule type" value="Genomic_DNA"/>
</dbReference>
<dbReference type="EMBL" id="BC001292">
    <property type="protein sequence ID" value="AAH01292.2"/>
    <property type="molecule type" value="mRNA"/>
</dbReference>
<dbReference type="EMBL" id="BC002743">
    <property type="protein sequence ID" value="AAH02743.2"/>
    <property type="molecule type" value="mRNA"/>
</dbReference>
<dbReference type="EMBL" id="BC020976">
    <property type="protein sequence ID" value="AAH20976.2"/>
    <property type="molecule type" value="mRNA"/>
</dbReference>
<dbReference type="EMBL" id="BC029897">
    <property type="protein sequence ID" value="AAH29897.1"/>
    <property type="molecule type" value="mRNA"/>
</dbReference>
<dbReference type="EMBL" id="AL096779">
    <property type="protein sequence ID" value="CAB46628.1"/>
    <property type="status" value="ALT_INIT"/>
    <property type="molecule type" value="mRNA"/>
</dbReference>
<dbReference type="CCDS" id="CCDS14078.1">
    <molecule id="Q8WUA7-1"/>
</dbReference>
<dbReference type="CCDS" id="CCDS63511.1">
    <molecule id="Q8WUA7-2"/>
</dbReference>
<dbReference type="CCDS" id="CCDS63512.1">
    <molecule id="Q8WUA7-4"/>
</dbReference>
<dbReference type="RefSeq" id="NP_001271232.1">
    <molecule id="Q8WUA7-2"/>
    <property type="nucleotide sequence ID" value="NM_001284303.2"/>
</dbReference>
<dbReference type="RefSeq" id="NP_001271234.1">
    <molecule id="Q8WUA7-4"/>
    <property type="nucleotide sequence ID" value="NM_001284305.2"/>
</dbReference>
<dbReference type="RefSeq" id="NP_055161.1">
    <molecule id="Q8WUA7-1"/>
    <property type="nucleotide sequence ID" value="NM_014346.5"/>
</dbReference>
<dbReference type="RefSeq" id="XP_016884233.1">
    <property type="nucleotide sequence ID" value="XM_017028744.1"/>
</dbReference>
<dbReference type="PDB" id="2QFZ">
    <property type="method" value="X-ray"/>
    <property type="resolution" value="2.10 A"/>
    <property type="chains" value="A/B=191-517"/>
</dbReference>
<dbReference type="PDBsum" id="2QFZ"/>
<dbReference type="SMR" id="Q8WUA7"/>
<dbReference type="BioGRID" id="117308">
    <property type="interactions" value="37"/>
</dbReference>
<dbReference type="FunCoup" id="Q8WUA7">
    <property type="interactions" value="2893"/>
</dbReference>
<dbReference type="IntAct" id="Q8WUA7">
    <property type="interactions" value="37"/>
</dbReference>
<dbReference type="STRING" id="9606.ENSP00000336724"/>
<dbReference type="GlyGen" id="Q8WUA7">
    <property type="glycosylation" value="1 site, 1 O-linked glycan (1 site)"/>
</dbReference>
<dbReference type="iPTMnet" id="Q8WUA7"/>
<dbReference type="PhosphoSitePlus" id="Q8WUA7"/>
<dbReference type="BioMuta" id="TBC1D22A"/>
<dbReference type="DMDM" id="25008319"/>
<dbReference type="jPOST" id="Q8WUA7"/>
<dbReference type="MassIVE" id="Q8WUA7"/>
<dbReference type="PaxDb" id="9606-ENSP00000336724"/>
<dbReference type="PeptideAtlas" id="Q8WUA7"/>
<dbReference type="ProteomicsDB" id="2648"/>
<dbReference type="ProteomicsDB" id="74649">
    <molecule id="Q8WUA7-1"/>
</dbReference>
<dbReference type="ProteomicsDB" id="74650">
    <molecule id="Q8WUA7-2"/>
</dbReference>
<dbReference type="ProteomicsDB" id="74651">
    <molecule id="Q8WUA7-3"/>
</dbReference>
<dbReference type="Pumba" id="Q8WUA7"/>
<dbReference type="Antibodypedia" id="242">
    <property type="antibodies" value="161 antibodies from 22 providers"/>
</dbReference>
<dbReference type="DNASU" id="25771"/>
<dbReference type="Ensembl" id="ENST00000337137.9">
    <molecule id="Q8WUA7-1"/>
    <property type="protein sequence ID" value="ENSP00000336724.4"/>
    <property type="gene ID" value="ENSG00000054611.14"/>
</dbReference>
<dbReference type="Ensembl" id="ENST00000355704.7">
    <molecule id="Q8WUA7-2"/>
    <property type="protein sequence ID" value="ENSP00000347932.3"/>
    <property type="gene ID" value="ENSG00000054611.14"/>
</dbReference>
<dbReference type="Ensembl" id="ENST00000406733.1">
    <molecule id="Q8WUA7-4"/>
    <property type="protein sequence ID" value="ENSP00000385634.1"/>
    <property type="gene ID" value="ENSG00000054611.14"/>
</dbReference>
<dbReference type="Ensembl" id="ENST00000441162.5">
    <molecule id="Q8WUA7-3"/>
    <property type="protein sequence ID" value="ENSP00000406214.1"/>
    <property type="gene ID" value="ENSG00000054611.14"/>
</dbReference>
<dbReference type="GeneID" id="25771"/>
<dbReference type="KEGG" id="hsa:25771"/>
<dbReference type="MANE-Select" id="ENST00000337137.9">
    <property type="protein sequence ID" value="ENSP00000336724.4"/>
    <property type="RefSeq nucleotide sequence ID" value="NM_014346.5"/>
    <property type="RefSeq protein sequence ID" value="NP_055161.1"/>
</dbReference>
<dbReference type="UCSC" id="uc003bib.5">
    <molecule id="Q8WUA7-1"/>
    <property type="organism name" value="human"/>
</dbReference>
<dbReference type="AGR" id="HGNC:1309"/>
<dbReference type="CTD" id="25771"/>
<dbReference type="DisGeNET" id="25771"/>
<dbReference type="GeneCards" id="TBC1D22A"/>
<dbReference type="HGNC" id="HGNC:1309">
    <property type="gene designation" value="TBC1D22A"/>
</dbReference>
<dbReference type="HPA" id="ENSG00000054611">
    <property type="expression patterns" value="Low tissue specificity"/>
</dbReference>
<dbReference type="MIM" id="616879">
    <property type="type" value="gene"/>
</dbReference>
<dbReference type="neXtProt" id="NX_Q8WUA7"/>
<dbReference type="OpenTargets" id="ENSG00000054611"/>
<dbReference type="PharmGKB" id="PA25888"/>
<dbReference type="VEuPathDB" id="HostDB:ENSG00000054611"/>
<dbReference type="eggNOG" id="KOG1092">
    <property type="taxonomic scope" value="Eukaryota"/>
</dbReference>
<dbReference type="GeneTree" id="ENSGT00940000159840"/>
<dbReference type="InParanoid" id="Q8WUA7"/>
<dbReference type="OMA" id="VHWGNEE"/>
<dbReference type="OrthoDB" id="26371at2759"/>
<dbReference type="PAN-GO" id="Q8WUA7">
    <property type="GO annotations" value="2 GO annotations based on evolutionary models"/>
</dbReference>
<dbReference type="PhylomeDB" id="Q8WUA7"/>
<dbReference type="TreeFam" id="TF314211"/>
<dbReference type="PathwayCommons" id="Q8WUA7"/>
<dbReference type="SignaLink" id="Q8WUA7"/>
<dbReference type="BioGRID-ORCS" id="25771">
    <property type="hits" value="16 hits in 1172 CRISPR screens"/>
</dbReference>
<dbReference type="ChiTaRS" id="TBC1D22A">
    <property type="organism name" value="human"/>
</dbReference>
<dbReference type="EvolutionaryTrace" id="Q8WUA7"/>
<dbReference type="GenomeRNAi" id="25771"/>
<dbReference type="Pharos" id="Q8WUA7">
    <property type="development level" value="Tbio"/>
</dbReference>
<dbReference type="PRO" id="PR:Q8WUA7"/>
<dbReference type="Proteomes" id="UP000005640">
    <property type="component" value="Chromosome 22"/>
</dbReference>
<dbReference type="RNAct" id="Q8WUA7">
    <property type="molecule type" value="protein"/>
</dbReference>
<dbReference type="Bgee" id="ENSG00000054611">
    <property type="expression patterns" value="Expressed in pancreatic ductal cell and 182 other cell types or tissues"/>
</dbReference>
<dbReference type="ExpressionAtlas" id="Q8WUA7">
    <property type="expression patterns" value="baseline and differential"/>
</dbReference>
<dbReference type="GO" id="GO:0005794">
    <property type="term" value="C:Golgi apparatus"/>
    <property type="evidence" value="ECO:0000318"/>
    <property type="project" value="GO_Central"/>
</dbReference>
<dbReference type="GO" id="GO:0071889">
    <property type="term" value="F:14-3-3 protein binding"/>
    <property type="evidence" value="ECO:0000314"/>
    <property type="project" value="UniProtKB"/>
</dbReference>
<dbReference type="GO" id="GO:0005096">
    <property type="term" value="F:GTPase activator activity"/>
    <property type="evidence" value="ECO:0000318"/>
    <property type="project" value="GO_Central"/>
</dbReference>
<dbReference type="GO" id="GO:0042803">
    <property type="term" value="F:protein homodimerization activity"/>
    <property type="evidence" value="ECO:0000314"/>
    <property type="project" value="UniProtKB"/>
</dbReference>
<dbReference type="FunFam" id="1.10.472.80:FF:000001">
    <property type="entry name" value="TBC1 domain family member 22B"/>
    <property type="match status" value="1"/>
</dbReference>
<dbReference type="FunFam" id="1.10.8.270:FF:000004">
    <property type="entry name" value="TBC1 domain family, member 22B"/>
    <property type="match status" value="1"/>
</dbReference>
<dbReference type="Gene3D" id="1.10.8.270">
    <property type="entry name" value="putative rabgap domain of human tbc1 domain family member 14 like domains"/>
    <property type="match status" value="1"/>
</dbReference>
<dbReference type="Gene3D" id="1.10.472.80">
    <property type="entry name" value="Ypt/Rab-GAP domain of gyp1p, domain 3"/>
    <property type="match status" value="1"/>
</dbReference>
<dbReference type="InterPro" id="IPR000195">
    <property type="entry name" value="Rab-GAP-TBC_dom"/>
</dbReference>
<dbReference type="InterPro" id="IPR035969">
    <property type="entry name" value="Rab-GAP_TBC_sf"/>
</dbReference>
<dbReference type="PANTHER" id="PTHR22957:SF255">
    <property type="entry name" value="TBC1 DOMAIN FAMILY MEMBER 22A"/>
    <property type="match status" value="1"/>
</dbReference>
<dbReference type="PANTHER" id="PTHR22957">
    <property type="entry name" value="TBC1 DOMAIN FAMILY MEMBER GTPASE-ACTIVATING PROTEIN"/>
    <property type="match status" value="1"/>
</dbReference>
<dbReference type="Pfam" id="PF00566">
    <property type="entry name" value="RabGAP-TBC"/>
    <property type="match status" value="1"/>
</dbReference>
<dbReference type="SMART" id="SM00164">
    <property type="entry name" value="TBC"/>
    <property type="match status" value="1"/>
</dbReference>
<dbReference type="SUPFAM" id="SSF47923">
    <property type="entry name" value="Ypt/Rab-GAP domain of gyp1p"/>
    <property type="match status" value="2"/>
</dbReference>
<dbReference type="PROSITE" id="PS50086">
    <property type="entry name" value="TBC_RABGAP"/>
    <property type="match status" value="1"/>
</dbReference>
<feature type="initiator methionine" description="Removed" evidence="6">
    <location>
        <position position="1"/>
    </location>
</feature>
<feature type="chain" id="PRO_0000208051" description="TBC1 domain family member 22A">
    <location>
        <begin position="2"/>
        <end position="517"/>
    </location>
</feature>
<feature type="domain" description="Rab-GAP TBC" evidence="3">
    <location>
        <begin position="222"/>
        <end position="446"/>
    </location>
</feature>
<feature type="region of interest" description="Disordered" evidence="4">
    <location>
        <begin position="103"/>
        <end position="191"/>
    </location>
</feature>
<feature type="compositionally biased region" description="Polar residues" evidence="4">
    <location>
        <begin position="163"/>
        <end position="174"/>
    </location>
</feature>
<feature type="compositionally biased region" description="Low complexity" evidence="4">
    <location>
        <begin position="176"/>
        <end position="190"/>
    </location>
</feature>
<feature type="modified residue" description="N-acetylalanine" evidence="6">
    <location>
        <position position="2"/>
    </location>
</feature>
<feature type="modified residue" description="Phosphoserine" evidence="10">
    <location>
        <position position="132"/>
    </location>
</feature>
<feature type="modified residue" description="Phosphoserine" evidence="2">
    <location>
        <position position="145"/>
    </location>
</feature>
<feature type="modified residue" description="Phosphoserine" evidence="2">
    <location>
        <position position="167"/>
    </location>
</feature>
<feature type="splice variant" id="VSP_015142" description="In isoform 3 and isoform 4." evidence="7">
    <location>
        <begin position="1"/>
        <end position="47"/>
    </location>
</feature>
<feature type="splice variant" id="VSP_010382" description="In isoform 2." evidence="8">
    <location>
        <begin position="22"/>
        <end position="40"/>
    </location>
</feature>
<feature type="splice variant" id="VSP_010383" description="In isoform 2." evidence="8">
    <location>
        <begin position="154"/>
        <end position="212"/>
    </location>
</feature>
<feature type="splice variant" id="VSP_015143" description="In isoform 3." evidence="7">
    <original>EAEEVDTVDVSGVPAEVLCNIEADTYWCMSKLL</original>
    <variation>AFPGCGRPQIPILAVIWRDEPYPRTDEQIILRR</variation>
    <location>
        <begin position="339"/>
        <end position="371"/>
    </location>
</feature>
<feature type="splice variant" id="VSP_015144" description="In isoform 3." evidence="7">
    <location>
        <begin position="372"/>
        <end position="517"/>
    </location>
</feature>
<feature type="mutagenesis site" description="No effect on ACBD3-binding." evidence="6">
    <original>NSE</original>
    <variation>AAA</variation>
    <location>
        <begin position="90"/>
        <end position="92"/>
    </location>
</feature>
<feature type="mutagenesis site" description="No effect on interaction with ACBD3, nor with 14-3-3 proteins." evidence="6">
    <original>EV</original>
    <variation>AA</variation>
    <location>
        <begin position="92"/>
        <end position="93"/>
    </location>
</feature>
<feature type="mutagenesis site" description="Decreased ACBD3-binding." evidence="6">
    <original>VVME</original>
    <variation>AAAA</variation>
    <location>
        <begin position="93"/>
        <end position="96"/>
    </location>
</feature>
<feature type="mutagenesis site" description="No effect on ACBD3-binding." evidence="6">
    <original>ET</original>
    <variation>AA</variation>
    <location>
        <begin position="96"/>
        <end position="97"/>
    </location>
</feature>
<feature type="mutagenesis site" description="No effect on ACBD3-binding." evidence="6">
    <original>NR</original>
    <variation>AA</variation>
    <location>
        <begin position="99"/>
        <end position="100"/>
    </location>
</feature>
<feature type="mutagenesis site" description="Drastically decreased ACBD3-binding. No effect on binding to 14-3-3 protein." evidence="6">
    <original>VL</original>
    <variation>AA</variation>
    <location>
        <begin position="101"/>
        <end position="102"/>
    </location>
</feature>
<feature type="mutagenesis site" description="No effect on ACBD3-binding." evidence="6">
    <original>RNH</original>
    <variation>AAA</variation>
    <location>
        <begin position="103"/>
        <end position="105"/>
    </location>
</feature>
<feature type="mutagenesis site" description="No effect on 14-3-3 protein-binding." evidence="6">
    <original>S</original>
    <variation>A</variation>
    <location>
        <position position="132"/>
    </location>
</feature>
<feature type="mutagenesis site" description="Decreased 14-3-3 protein-binding." evidence="6">
    <original>TS</original>
    <variation>EE</variation>
    <location>
        <begin position="149"/>
        <end position="150"/>
    </location>
</feature>
<feature type="mutagenesis site" description="Complete loss of 14-3-3 protein-binding." evidence="6">
    <original>SQS</original>
    <variation>AQA</variation>
    <location>
        <begin position="165"/>
        <end position="167"/>
    </location>
</feature>
<feature type="mutagenesis site" description="Complete loss of 14-3-3 protein-binding." evidence="6">
    <original>SQS</original>
    <variation>EQE</variation>
    <location>
        <begin position="165"/>
        <end position="167"/>
    </location>
</feature>
<feature type="mutagenesis site" description="No effect on interaction with ACBD3. Decreased 14-3-3 protein-binding." evidence="6">
    <original>S</original>
    <variation>A</variation>
    <location>
        <position position="165"/>
    </location>
</feature>
<feature type="mutagenesis site" description="Complete loss of 14-3-3 protein-binding." evidence="6">
    <original>S</original>
    <variation>E</variation>
    <location>
        <position position="165"/>
    </location>
</feature>
<feature type="mutagenesis site" description="Complete loss of 14-3-3 protein-binding." evidence="6">
    <original>S</original>
    <variation>E</variation>
    <location>
        <position position="167"/>
    </location>
</feature>
<feature type="mutagenesis site" description="Decreased 14-3-3 protein-binding." evidence="6">
    <original>Q</original>
    <variation>A</variation>
    <location>
        <position position="320"/>
    </location>
</feature>
<feature type="sequence conflict" description="In Ref. 6; AAH01292." evidence="9" ref="6">
    <original>E</original>
    <variation>K</variation>
    <location>
        <position position="92"/>
    </location>
</feature>
<feature type="sequence conflict" description="In Ref. 4; AAD12228." evidence="9" ref="4">
    <original>EAEEVDT</original>
    <variation>GKISCKH</variation>
    <location>
        <begin position="339"/>
        <end position="345"/>
    </location>
</feature>
<feature type="sequence conflict" description="In Ref. 6; AAH01292." evidence="9" ref="6">
    <original>G</original>
    <variation>C</variation>
    <location>
        <position position="350"/>
    </location>
</feature>
<feature type="helix" evidence="11">
    <location>
        <begin position="197"/>
        <end position="206"/>
    </location>
</feature>
<feature type="helix" evidence="11">
    <location>
        <begin position="212"/>
        <end position="219"/>
    </location>
</feature>
<feature type="helix" evidence="11">
    <location>
        <begin position="225"/>
        <end position="227"/>
    </location>
</feature>
<feature type="helix" evidence="11">
    <location>
        <begin position="228"/>
        <end position="235"/>
    </location>
</feature>
<feature type="helix" evidence="11">
    <location>
        <begin position="243"/>
        <end position="245"/>
    </location>
</feature>
<feature type="helix" evidence="11">
    <location>
        <begin position="246"/>
        <end position="263"/>
    </location>
</feature>
<feature type="helix" evidence="11">
    <location>
        <begin position="274"/>
        <end position="283"/>
    </location>
</feature>
<feature type="helix" evidence="11">
    <location>
        <begin position="284"/>
        <end position="286"/>
    </location>
</feature>
<feature type="helix" evidence="11">
    <location>
        <begin position="290"/>
        <end position="293"/>
    </location>
</feature>
<feature type="helix" evidence="11">
    <location>
        <begin position="296"/>
        <end position="312"/>
    </location>
</feature>
<feature type="turn" evidence="11">
    <location>
        <begin position="314"/>
        <end position="316"/>
    </location>
</feature>
<feature type="helix" evidence="11">
    <location>
        <begin position="322"/>
        <end position="334"/>
    </location>
</feature>
<feature type="helix" evidence="11">
    <location>
        <begin position="335"/>
        <end position="337"/>
    </location>
</feature>
<feature type="helix" evidence="11">
    <location>
        <begin position="353"/>
        <end position="372"/>
    </location>
</feature>
<feature type="helix" evidence="11">
    <location>
        <begin position="375"/>
        <end position="377"/>
    </location>
</feature>
<feature type="helix" evidence="11">
    <location>
        <begin position="383"/>
        <end position="399"/>
    </location>
</feature>
<feature type="helix" evidence="11">
    <location>
        <begin position="401"/>
        <end position="409"/>
    </location>
</feature>
<feature type="helix" evidence="11">
    <location>
        <begin position="414"/>
        <end position="423"/>
    </location>
</feature>
<feature type="turn" evidence="11">
    <location>
        <begin position="424"/>
        <end position="429"/>
    </location>
</feature>
<feature type="helix" evidence="11">
    <location>
        <begin position="432"/>
        <end position="442"/>
    </location>
</feature>
<feature type="turn" evidence="11">
    <location>
        <begin position="446"/>
        <end position="451"/>
    </location>
</feature>
<feature type="helix" evidence="11">
    <location>
        <begin position="452"/>
        <end position="463"/>
    </location>
</feature>
<feature type="helix" evidence="11">
    <location>
        <begin position="465"/>
        <end position="470"/>
    </location>
</feature>
<feature type="helix" evidence="11">
    <location>
        <begin position="474"/>
        <end position="481"/>
    </location>
</feature>
<feature type="helix" evidence="11">
    <location>
        <begin position="491"/>
        <end position="507"/>
    </location>
</feature>
<reference key="1">
    <citation type="journal article" date="2009" name="Genes Cells">
        <title>Identification and characterization of a novel Tre-2/Bub2/Cdc16 (TBC) protein that possesses Rab3A-GAP activity.</title>
        <authorList>
            <person name="Ishibashi K."/>
            <person name="Kanno E."/>
            <person name="Itoh T."/>
            <person name="Fukuda M."/>
        </authorList>
    </citation>
    <scope>NUCLEOTIDE SEQUENCE [MRNA] (ISOFORM 1)</scope>
    <source>
        <tissue>Brain</tissue>
    </source>
</reference>
<reference key="2">
    <citation type="journal article" date="2004" name="Genome Biol.">
        <title>A genome annotation-driven approach to cloning the human ORFeome.</title>
        <authorList>
            <person name="Collins J.E."/>
            <person name="Wright C.L."/>
            <person name="Edwards C.A."/>
            <person name="Davis M.P."/>
            <person name="Grinham J.A."/>
            <person name="Cole C.G."/>
            <person name="Goward M.E."/>
            <person name="Aguado B."/>
            <person name="Mallya M."/>
            <person name="Mokrab Y."/>
            <person name="Huckle E.J."/>
            <person name="Beare D.M."/>
            <person name="Dunham I."/>
        </authorList>
    </citation>
    <scope>NUCLEOTIDE SEQUENCE [LARGE SCALE MRNA] (ISOFORM 1)</scope>
</reference>
<reference key="3">
    <citation type="journal article" date="2004" name="Nat. Genet.">
        <title>Complete sequencing and characterization of 21,243 full-length human cDNAs.</title>
        <authorList>
            <person name="Ota T."/>
            <person name="Suzuki Y."/>
            <person name="Nishikawa T."/>
            <person name="Otsuki T."/>
            <person name="Sugiyama T."/>
            <person name="Irie R."/>
            <person name="Wakamatsu A."/>
            <person name="Hayashi K."/>
            <person name="Sato H."/>
            <person name="Nagai K."/>
            <person name="Kimura K."/>
            <person name="Makita H."/>
            <person name="Sekine M."/>
            <person name="Obayashi M."/>
            <person name="Nishi T."/>
            <person name="Shibahara T."/>
            <person name="Tanaka T."/>
            <person name="Ishii S."/>
            <person name="Yamamoto J."/>
            <person name="Saito K."/>
            <person name="Kawai Y."/>
            <person name="Isono Y."/>
            <person name="Nakamura Y."/>
            <person name="Nagahari K."/>
            <person name="Murakami K."/>
            <person name="Yasuda T."/>
            <person name="Iwayanagi T."/>
            <person name="Wagatsuma M."/>
            <person name="Shiratori A."/>
            <person name="Sudo H."/>
            <person name="Hosoiri T."/>
            <person name="Kaku Y."/>
            <person name="Kodaira H."/>
            <person name="Kondo H."/>
            <person name="Sugawara M."/>
            <person name="Takahashi M."/>
            <person name="Kanda K."/>
            <person name="Yokoi T."/>
            <person name="Furuya T."/>
            <person name="Kikkawa E."/>
            <person name="Omura Y."/>
            <person name="Abe K."/>
            <person name="Kamihara K."/>
            <person name="Katsuta N."/>
            <person name="Sato K."/>
            <person name="Tanikawa M."/>
            <person name="Yamazaki M."/>
            <person name="Ninomiya K."/>
            <person name="Ishibashi T."/>
            <person name="Yamashita H."/>
            <person name="Murakawa K."/>
            <person name="Fujimori K."/>
            <person name="Tanai H."/>
            <person name="Kimata M."/>
            <person name="Watanabe M."/>
            <person name="Hiraoka S."/>
            <person name="Chiba Y."/>
            <person name="Ishida S."/>
            <person name="Ono Y."/>
            <person name="Takiguchi S."/>
            <person name="Watanabe S."/>
            <person name="Yosida M."/>
            <person name="Hotuta T."/>
            <person name="Kusano J."/>
            <person name="Kanehori K."/>
            <person name="Takahashi-Fujii A."/>
            <person name="Hara H."/>
            <person name="Tanase T.-O."/>
            <person name="Nomura Y."/>
            <person name="Togiya S."/>
            <person name="Komai F."/>
            <person name="Hara R."/>
            <person name="Takeuchi K."/>
            <person name="Arita M."/>
            <person name="Imose N."/>
            <person name="Musashino K."/>
            <person name="Yuuki H."/>
            <person name="Oshima A."/>
            <person name="Sasaki N."/>
            <person name="Aotsuka S."/>
            <person name="Yoshikawa Y."/>
            <person name="Matsunawa H."/>
            <person name="Ichihara T."/>
            <person name="Shiohata N."/>
            <person name="Sano S."/>
            <person name="Moriya S."/>
            <person name="Momiyama H."/>
            <person name="Satoh N."/>
            <person name="Takami S."/>
            <person name="Terashima Y."/>
            <person name="Suzuki O."/>
            <person name="Nakagawa S."/>
            <person name="Senoh A."/>
            <person name="Mizoguchi H."/>
            <person name="Goto Y."/>
            <person name="Shimizu F."/>
            <person name="Wakebe H."/>
            <person name="Hishigaki H."/>
            <person name="Watanabe T."/>
            <person name="Sugiyama A."/>
            <person name="Takemoto M."/>
            <person name="Kawakami B."/>
            <person name="Yamazaki M."/>
            <person name="Watanabe K."/>
            <person name="Kumagai A."/>
            <person name="Itakura S."/>
            <person name="Fukuzumi Y."/>
            <person name="Fujimori Y."/>
            <person name="Komiyama M."/>
            <person name="Tashiro H."/>
            <person name="Tanigami A."/>
            <person name="Fujiwara T."/>
            <person name="Ono T."/>
            <person name="Yamada K."/>
            <person name="Fujii Y."/>
            <person name="Ozaki K."/>
            <person name="Hirao M."/>
            <person name="Ohmori Y."/>
            <person name="Kawabata A."/>
            <person name="Hikiji T."/>
            <person name="Kobatake N."/>
            <person name="Inagaki H."/>
            <person name="Ikema Y."/>
            <person name="Okamoto S."/>
            <person name="Okitani R."/>
            <person name="Kawakami T."/>
            <person name="Noguchi S."/>
            <person name="Itoh T."/>
            <person name="Shigeta K."/>
            <person name="Senba T."/>
            <person name="Matsumura K."/>
            <person name="Nakajima Y."/>
            <person name="Mizuno T."/>
            <person name="Morinaga M."/>
            <person name="Sasaki M."/>
            <person name="Togashi T."/>
            <person name="Oyama M."/>
            <person name="Hata H."/>
            <person name="Watanabe M."/>
            <person name="Komatsu T."/>
            <person name="Mizushima-Sugano J."/>
            <person name="Satoh T."/>
            <person name="Shirai Y."/>
            <person name="Takahashi Y."/>
            <person name="Nakagawa K."/>
            <person name="Okumura K."/>
            <person name="Nagase T."/>
            <person name="Nomura N."/>
            <person name="Kikuchi H."/>
            <person name="Masuho Y."/>
            <person name="Yamashita R."/>
            <person name="Nakai K."/>
            <person name="Yada T."/>
            <person name="Nakamura Y."/>
            <person name="Ohara O."/>
            <person name="Isogai T."/>
            <person name="Sugano S."/>
        </authorList>
    </citation>
    <scope>NUCLEOTIDE SEQUENCE [LARGE SCALE MRNA] (ISOFORMS 3 AND 4)</scope>
    <source>
        <tissue>Esophagus</tissue>
    </source>
</reference>
<reference key="4">
    <citation type="journal article" date="1999" name="Nature">
        <title>The DNA sequence of human chromosome 22.</title>
        <authorList>
            <person name="Dunham I."/>
            <person name="Hunt A.R."/>
            <person name="Collins J.E."/>
            <person name="Bruskiewich R."/>
            <person name="Beare D.M."/>
            <person name="Clamp M."/>
            <person name="Smink L.J."/>
            <person name="Ainscough R."/>
            <person name="Almeida J.P."/>
            <person name="Babbage A.K."/>
            <person name="Bagguley C."/>
            <person name="Bailey J."/>
            <person name="Barlow K.F."/>
            <person name="Bates K.N."/>
            <person name="Beasley O.P."/>
            <person name="Bird C.P."/>
            <person name="Blakey S.E."/>
            <person name="Bridgeman A.M."/>
            <person name="Buck D."/>
            <person name="Burgess J."/>
            <person name="Burrill W.D."/>
            <person name="Burton J."/>
            <person name="Carder C."/>
            <person name="Carter N.P."/>
            <person name="Chen Y."/>
            <person name="Clark G."/>
            <person name="Clegg S.M."/>
            <person name="Cobley V.E."/>
            <person name="Cole C.G."/>
            <person name="Collier R.E."/>
            <person name="Connor R."/>
            <person name="Conroy D."/>
            <person name="Corby N.R."/>
            <person name="Coville G.J."/>
            <person name="Cox A.V."/>
            <person name="Davis J."/>
            <person name="Dawson E."/>
            <person name="Dhami P.D."/>
            <person name="Dockree C."/>
            <person name="Dodsworth S.J."/>
            <person name="Durbin R.M."/>
            <person name="Ellington A.G."/>
            <person name="Evans K.L."/>
            <person name="Fey J.M."/>
            <person name="Fleming K."/>
            <person name="French L."/>
            <person name="Garner A.A."/>
            <person name="Gilbert J.G.R."/>
            <person name="Goward M.E."/>
            <person name="Grafham D.V."/>
            <person name="Griffiths M.N.D."/>
            <person name="Hall C."/>
            <person name="Hall R.E."/>
            <person name="Hall-Tamlyn G."/>
            <person name="Heathcott R.W."/>
            <person name="Ho S."/>
            <person name="Holmes S."/>
            <person name="Hunt S.E."/>
            <person name="Jones M.C."/>
            <person name="Kershaw J."/>
            <person name="Kimberley A.M."/>
            <person name="King A."/>
            <person name="Laird G.K."/>
            <person name="Langford C.F."/>
            <person name="Leversha M.A."/>
            <person name="Lloyd C."/>
            <person name="Lloyd D.M."/>
            <person name="Martyn I.D."/>
            <person name="Mashreghi-Mohammadi M."/>
            <person name="Matthews L.H."/>
            <person name="Mccann O.T."/>
            <person name="Mcclay J."/>
            <person name="Mclaren S."/>
            <person name="McMurray A.A."/>
            <person name="Milne S.A."/>
            <person name="Mortimore B.J."/>
            <person name="Odell C.N."/>
            <person name="Pavitt R."/>
            <person name="Pearce A.V."/>
            <person name="Pearson D."/>
            <person name="Phillimore B.J.C.T."/>
            <person name="Phillips S.H."/>
            <person name="Plumb R.W."/>
            <person name="Ramsay H."/>
            <person name="Ramsey Y."/>
            <person name="Rogers L."/>
            <person name="Ross M.T."/>
            <person name="Scott C.E."/>
            <person name="Sehra H.K."/>
            <person name="Skuce C.D."/>
            <person name="Smalley S."/>
            <person name="Smith M.L."/>
            <person name="Soderlund C."/>
            <person name="Spragon L."/>
            <person name="Steward C.A."/>
            <person name="Sulston J.E."/>
            <person name="Swann R.M."/>
            <person name="Vaudin M."/>
            <person name="Wall M."/>
            <person name="Wallis J.M."/>
            <person name="Whiteley M.N."/>
            <person name="Willey D.L."/>
            <person name="Williams L."/>
            <person name="Williams S.A."/>
            <person name="Williamson H."/>
            <person name="Wilmer T.E."/>
            <person name="Wilming L."/>
            <person name="Wright C.L."/>
            <person name="Hubbard T."/>
            <person name="Bentley D.R."/>
            <person name="Beck S."/>
            <person name="Rogers J."/>
            <person name="Shimizu N."/>
            <person name="Minoshima S."/>
            <person name="Kawasaki K."/>
            <person name="Sasaki T."/>
            <person name="Asakawa S."/>
            <person name="Kudoh J."/>
            <person name="Shintani A."/>
            <person name="Shibuya K."/>
            <person name="Yoshizaki Y."/>
            <person name="Aoki N."/>
            <person name="Mitsuyama S."/>
            <person name="Roe B.A."/>
            <person name="Chen F."/>
            <person name="Chu L."/>
            <person name="Crabtree J."/>
            <person name="Deschamps S."/>
            <person name="Do A."/>
            <person name="Do T."/>
            <person name="Dorman A."/>
            <person name="Fang F."/>
            <person name="Fu Y."/>
            <person name="Hu P."/>
            <person name="Hua A."/>
            <person name="Kenton S."/>
            <person name="Lai H."/>
            <person name="Lao H.I."/>
            <person name="Lewis J."/>
            <person name="Lewis S."/>
            <person name="Lin S.-P."/>
            <person name="Loh P."/>
            <person name="Malaj E."/>
            <person name="Nguyen T."/>
            <person name="Pan H."/>
            <person name="Phan S."/>
            <person name="Qi S."/>
            <person name="Qian Y."/>
            <person name="Ray L."/>
            <person name="Ren Q."/>
            <person name="Shaull S."/>
            <person name="Sloan D."/>
            <person name="Song L."/>
            <person name="Wang Q."/>
            <person name="Wang Y."/>
            <person name="Wang Z."/>
            <person name="White J."/>
            <person name="Willingham D."/>
            <person name="Wu H."/>
            <person name="Yao Z."/>
            <person name="Zhan M."/>
            <person name="Zhang G."/>
            <person name="Chissoe S."/>
            <person name="Murray J."/>
            <person name="Miller N."/>
            <person name="Minx P."/>
            <person name="Fulton R."/>
            <person name="Johnson D."/>
            <person name="Bemis G."/>
            <person name="Bentley D."/>
            <person name="Bradshaw H."/>
            <person name="Bourne S."/>
            <person name="Cordes M."/>
            <person name="Du Z."/>
            <person name="Fulton L."/>
            <person name="Goela D."/>
            <person name="Graves T."/>
            <person name="Hawkins J."/>
            <person name="Hinds K."/>
            <person name="Kemp K."/>
            <person name="Latreille P."/>
            <person name="Layman D."/>
            <person name="Ozersky P."/>
            <person name="Rohlfing T."/>
            <person name="Scheet P."/>
            <person name="Walker C."/>
            <person name="Wamsley A."/>
            <person name="Wohldmann P."/>
            <person name="Pepin K."/>
            <person name="Nelson J."/>
            <person name="Korf I."/>
            <person name="Bedell J.A."/>
            <person name="Hillier L.W."/>
            <person name="Mardis E."/>
            <person name="Waterston R."/>
            <person name="Wilson R."/>
            <person name="Emanuel B.S."/>
            <person name="Shaikh T."/>
            <person name="Kurahashi H."/>
            <person name="Saitta S."/>
            <person name="Budarf M.L."/>
            <person name="McDermid H.E."/>
            <person name="Johnson A."/>
            <person name="Wong A.C.C."/>
            <person name="Morrow B.E."/>
            <person name="Edelmann L."/>
            <person name="Kim U.J."/>
            <person name="Shizuya H."/>
            <person name="Simon M.I."/>
            <person name="Dumanski J.P."/>
            <person name="Peyrard M."/>
            <person name="Kedra D."/>
            <person name="Seroussi E."/>
            <person name="Fransson I."/>
            <person name="Tapia I."/>
            <person name="Bruder C.E."/>
            <person name="O'Brien K.P."/>
            <person name="Wilkinson P."/>
            <person name="Bodenteich A."/>
            <person name="Hartman K."/>
            <person name="Hu X."/>
            <person name="Khan A.S."/>
            <person name="Lane L."/>
            <person name="Tilahun Y."/>
            <person name="Wright H."/>
        </authorList>
    </citation>
    <scope>NUCLEOTIDE SEQUENCE [LARGE SCALE GENOMIC DNA]</scope>
</reference>
<reference key="5">
    <citation type="submission" date="2005-07" db="EMBL/GenBank/DDBJ databases">
        <authorList>
            <person name="Mural R.J."/>
            <person name="Istrail S."/>
            <person name="Sutton G."/>
            <person name="Florea L."/>
            <person name="Halpern A.L."/>
            <person name="Mobarry C.M."/>
            <person name="Lippert R."/>
            <person name="Walenz B."/>
            <person name="Shatkay H."/>
            <person name="Dew I."/>
            <person name="Miller J.R."/>
            <person name="Flanigan M.J."/>
            <person name="Edwards N.J."/>
            <person name="Bolanos R."/>
            <person name="Fasulo D."/>
            <person name="Halldorsson B.V."/>
            <person name="Hannenhalli S."/>
            <person name="Turner R."/>
            <person name="Yooseph S."/>
            <person name="Lu F."/>
            <person name="Nusskern D.R."/>
            <person name="Shue B.C."/>
            <person name="Zheng X.H."/>
            <person name="Zhong F."/>
            <person name="Delcher A.L."/>
            <person name="Huson D.H."/>
            <person name="Kravitz S.A."/>
            <person name="Mouchard L."/>
            <person name="Reinert K."/>
            <person name="Remington K.A."/>
            <person name="Clark A.G."/>
            <person name="Waterman M.S."/>
            <person name="Eichler E.E."/>
            <person name="Adams M.D."/>
            <person name="Hunkapiller M.W."/>
            <person name="Myers E.W."/>
            <person name="Venter J.C."/>
        </authorList>
    </citation>
    <scope>NUCLEOTIDE SEQUENCE [LARGE SCALE GENOMIC DNA]</scope>
</reference>
<reference key="6">
    <citation type="journal article" date="2004" name="Genome Res.">
        <title>The status, quality, and expansion of the NIH full-length cDNA project: the Mammalian Gene Collection (MGC).</title>
        <authorList>
            <consortium name="The MGC Project Team"/>
        </authorList>
    </citation>
    <scope>NUCLEOTIDE SEQUENCE [LARGE SCALE MRNA] (ISOFORMS 1 AND 2)</scope>
    <source>
        <tissue>Brain</tissue>
        <tissue>Cervix</tissue>
        <tissue>Lung</tissue>
        <tissue>Testis</tissue>
        <tissue>Uterus</tissue>
    </source>
</reference>
<reference key="7">
    <citation type="journal article" date="2013" name="MBio">
        <title>ACBD3 interaction with TBC1 domain 22 protein is differentially affected by enteroviral and kobuviral 3A protein binding.</title>
        <authorList>
            <person name="Greninger A.L."/>
            <person name="Knudsen G.M."/>
            <person name="Betegon M."/>
            <person name="Burlingame A.L."/>
            <person name="DeRisi J.L."/>
        </authorList>
    </citation>
    <scope>PROTEIN SEQUENCE OF 2-304; 370-433; 438-463 AND 504-517</scope>
    <scope>CLEAVAGE OF INITIATOR METHIONINE</scope>
    <scope>ACETYLATION AT ALA-2</scope>
    <scope>PHOSPHORYLATION</scope>
    <scope>INTERACTION WITH ACBD3; ARFGEF1; YWHAB; YWHAE; YWHAG; YWHAH; YWHAQ AND YWHAZ</scope>
    <scope>MUTAGENESIS OF 90-ASN--GLU-92; 92-GLU-VAL-93; 93-VAL--GLU-96; 96-GLU-THR-97; 99-ASN-ARG-100; 101-VAL-LEU-102; 103-ARG--HIS-105; SER-132; SER-165; 165-SER--SER-167; SER-167; 149-THR-SER-150 AND GLN-320</scope>
    <scope>MASS SPECTROMETRY</scope>
</reference>
<reference key="8">
    <citation type="journal article" date="2003" name="Genome Res.">
        <title>Reevaluating human gene annotation: a second-generation analysis of chromosome 22.</title>
        <authorList>
            <person name="Collins J.E."/>
            <person name="Goward M.E."/>
            <person name="Cole C.G."/>
            <person name="Smink L.J."/>
            <person name="Huckle E.J."/>
            <person name="Knowles S."/>
            <person name="Bye J.M."/>
            <person name="Beare D.M."/>
            <person name="Dunham I."/>
        </authorList>
    </citation>
    <scope>NUCLEOTIDE SEQUENCE [LARGE SCALE MRNA] OF 213-517</scope>
</reference>
<reference key="9">
    <citation type="journal article" date="2008" name="Proc. Natl. Acad. Sci. U.S.A.">
        <title>A quantitative atlas of mitotic phosphorylation.</title>
        <authorList>
            <person name="Dephoure N."/>
            <person name="Zhou C."/>
            <person name="Villen J."/>
            <person name="Beausoleil S.A."/>
            <person name="Bakalarski C.E."/>
            <person name="Elledge S.J."/>
            <person name="Gygi S.P."/>
        </authorList>
    </citation>
    <scope>IDENTIFICATION BY MASS SPECTROMETRY [LARGE SCALE ANALYSIS]</scope>
    <source>
        <tissue>Cervix carcinoma</tissue>
    </source>
</reference>
<reference key="10">
    <citation type="journal article" date="2009" name="Sci. Signal.">
        <title>Quantitative phosphoproteomic analysis of T cell receptor signaling reveals system-wide modulation of protein-protein interactions.</title>
        <authorList>
            <person name="Mayya V."/>
            <person name="Lundgren D.H."/>
            <person name="Hwang S.-I."/>
            <person name="Rezaul K."/>
            <person name="Wu L."/>
            <person name="Eng J.K."/>
            <person name="Rodionov V."/>
            <person name="Han D.K."/>
        </authorList>
    </citation>
    <scope>IDENTIFICATION BY MASS SPECTROMETRY [LARGE SCALE ANALYSIS]</scope>
    <source>
        <tissue>Leukemic T-cell</tissue>
    </source>
</reference>
<reference key="11">
    <citation type="journal article" date="2010" name="Sci. Signal.">
        <title>Quantitative phosphoproteomics reveals widespread full phosphorylation site occupancy during mitosis.</title>
        <authorList>
            <person name="Olsen J.V."/>
            <person name="Vermeulen M."/>
            <person name="Santamaria A."/>
            <person name="Kumar C."/>
            <person name="Miller M.L."/>
            <person name="Jensen L.J."/>
            <person name="Gnad F."/>
            <person name="Cox J."/>
            <person name="Jensen T.S."/>
            <person name="Nigg E.A."/>
            <person name="Brunak S."/>
            <person name="Mann M."/>
        </authorList>
    </citation>
    <scope>IDENTIFICATION BY MASS SPECTROMETRY [LARGE SCALE ANALYSIS]</scope>
    <source>
        <tissue>Cervix carcinoma</tissue>
    </source>
</reference>
<reference key="12">
    <citation type="journal article" date="2011" name="Sci. Signal.">
        <title>System-wide temporal characterization of the proteome and phosphoproteome of human embryonic stem cell differentiation.</title>
        <authorList>
            <person name="Rigbolt K.T."/>
            <person name="Prokhorova T.A."/>
            <person name="Akimov V."/>
            <person name="Henningsen J."/>
            <person name="Johansen P.T."/>
            <person name="Kratchmarova I."/>
            <person name="Kassem M."/>
            <person name="Mann M."/>
            <person name="Olsen J.V."/>
            <person name="Blagoev B."/>
        </authorList>
    </citation>
    <scope>IDENTIFICATION BY MASS SPECTROMETRY [LARGE SCALE ANALYSIS]</scope>
</reference>
<reference key="13">
    <citation type="journal article" date="2013" name="J. Proteome Res.">
        <title>Toward a comprehensive characterization of a human cancer cell phosphoproteome.</title>
        <authorList>
            <person name="Zhou H."/>
            <person name="Di Palma S."/>
            <person name="Preisinger C."/>
            <person name="Peng M."/>
            <person name="Polat A.N."/>
            <person name="Heck A.J."/>
            <person name="Mohammed S."/>
        </authorList>
    </citation>
    <scope>IDENTIFICATION BY MASS SPECTROMETRY [LARGE SCALE ANALYSIS]</scope>
    <source>
        <tissue>Cervix carcinoma</tissue>
        <tissue>Erythroleukemia</tissue>
    </source>
</reference>
<reference key="14">
    <citation type="journal article" date="2014" name="J. Proteomics">
        <title>An enzyme assisted RP-RPLC approach for in-depth analysis of human liver phosphoproteome.</title>
        <authorList>
            <person name="Bian Y."/>
            <person name="Song C."/>
            <person name="Cheng K."/>
            <person name="Dong M."/>
            <person name="Wang F."/>
            <person name="Huang J."/>
            <person name="Sun D."/>
            <person name="Wang L."/>
            <person name="Ye M."/>
            <person name="Zou H."/>
        </authorList>
    </citation>
    <scope>PHOSPHORYLATION [LARGE SCALE ANALYSIS] AT SER-132</scope>
    <scope>IDENTIFICATION BY MASS SPECTROMETRY [LARGE SCALE ANALYSIS]</scope>
    <source>
        <tissue>Liver</tissue>
    </source>
</reference>
<reference key="15">
    <citation type="journal article" date="2008" name="Proteins">
        <title>First crystallographic models of human TBC domains in the context of a family-wide structural analysis.</title>
        <authorList>
            <person name="Tempel W."/>
            <person name="Tong Y."/>
            <person name="Dimov S."/>
            <person name="Bochkarev A."/>
            <person name="Park H."/>
        </authorList>
    </citation>
    <scope>X-RAY CRYSTALLOGRAPHY (2.1 ANGSTROMS) OF 191-517</scope>
    <scope>SUBUNIT</scope>
</reference>
<evidence type="ECO:0000250" key="1"/>
<evidence type="ECO:0000250" key="2">
    <source>
        <dbReference type="UniProtKB" id="Q8R5A6"/>
    </source>
</evidence>
<evidence type="ECO:0000255" key="3">
    <source>
        <dbReference type="PROSITE-ProRule" id="PRU00163"/>
    </source>
</evidence>
<evidence type="ECO:0000256" key="4">
    <source>
        <dbReference type="SAM" id="MobiDB-lite"/>
    </source>
</evidence>
<evidence type="ECO:0000269" key="5">
    <source>
    </source>
</evidence>
<evidence type="ECO:0000269" key="6">
    <source>
    </source>
</evidence>
<evidence type="ECO:0000303" key="7">
    <source>
    </source>
</evidence>
<evidence type="ECO:0000303" key="8">
    <source>
    </source>
</evidence>
<evidence type="ECO:0000305" key="9"/>
<evidence type="ECO:0007744" key="10">
    <source>
    </source>
</evidence>
<evidence type="ECO:0007829" key="11">
    <source>
        <dbReference type="PDB" id="2QFZ"/>
    </source>
</evidence>
<protein>
    <recommendedName>
        <fullName>TBC1 domain family member 22A</fullName>
    </recommendedName>
</protein>